<dbReference type="EC" id="4.2.1.33" evidence="1"/>
<dbReference type="EMBL" id="AE017262">
    <property type="protein sequence ID" value="AAT04782.1"/>
    <property type="molecule type" value="Genomic_DNA"/>
</dbReference>
<dbReference type="RefSeq" id="WP_003725878.1">
    <property type="nucleotide sequence ID" value="NC_002973.6"/>
</dbReference>
<dbReference type="SMR" id="Q71Y33"/>
<dbReference type="KEGG" id="lmf:LMOf2365_2012"/>
<dbReference type="HOGENOM" id="CLU_006714_3_4_9"/>
<dbReference type="UniPathway" id="UPA00048">
    <property type="reaction ID" value="UER00071"/>
</dbReference>
<dbReference type="GO" id="GO:0003861">
    <property type="term" value="F:3-isopropylmalate dehydratase activity"/>
    <property type="evidence" value="ECO:0007669"/>
    <property type="project" value="UniProtKB-UniRule"/>
</dbReference>
<dbReference type="GO" id="GO:0051539">
    <property type="term" value="F:4 iron, 4 sulfur cluster binding"/>
    <property type="evidence" value="ECO:0007669"/>
    <property type="project" value="UniProtKB-KW"/>
</dbReference>
<dbReference type="GO" id="GO:0046872">
    <property type="term" value="F:metal ion binding"/>
    <property type="evidence" value="ECO:0007669"/>
    <property type="project" value="UniProtKB-KW"/>
</dbReference>
<dbReference type="GO" id="GO:0009098">
    <property type="term" value="P:L-leucine biosynthetic process"/>
    <property type="evidence" value="ECO:0007669"/>
    <property type="project" value="UniProtKB-UniRule"/>
</dbReference>
<dbReference type="CDD" id="cd01583">
    <property type="entry name" value="IPMI"/>
    <property type="match status" value="1"/>
</dbReference>
<dbReference type="FunFam" id="3.30.499.10:FF:000007">
    <property type="entry name" value="3-isopropylmalate dehydratase large subunit"/>
    <property type="match status" value="1"/>
</dbReference>
<dbReference type="Gene3D" id="3.30.499.10">
    <property type="entry name" value="Aconitase, domain 3"/>
    <property type="match status" value="2"/>
</dbReference>
<dbReference type="HAMAP" id="MF_01026">
    <property type="entry name" value="LeuC_type1"/>
    <property type="match status" value="1"/>
</dbReference>
<dbReference type="InterPro" id="IPR004430">
    <property type="entry name" value="3-IsopropMal_deHydase_lsu"/>
</dbReference>
<dbReference type="InterPro" id="IPR015931">
    <property type="entry name" value="Acnase/IPM_dHydase_lsu_aba_1/3"/>
</dbReference>
<dbReference type="InterPro" id="IPR001030">
    <property type="entry name" value="Acoase/IPM_deHydtase_lsu_aba"/>
</dbReference>
<dbReference type="InterPro" id="IPR018136">
    <property type="entry name" value="Aconitase_4Fe-4S_BS"/>
</dbReference>
<dbReference type="InterPro" id="IPR036008">
    <property type="entry name" value="Aconitase_4Fe-4S_dom"/>
</dbReference>
<dbReference type="InterPro" id="IPR050067">
    <property type="entry name" value="IPM_dehydratase_rel_enz"/>
</dbReference>
<dbReference type="InterPro" id="IPR033941">
    <property type="entry name" value="IPMI_cat"/>
</dbReference>
<dbReference type="NCBIfam" id="TIGR00170">
    <property type="entry name" value="leuC"/>
    <property type="match status" value="1"/>
</dbReference>
<dbReference type="NCBIfam" id="NF004016">
    <property type="entry name" value="PRK05478.1"/>
    <property type="match status" value="1"/>
</dbReference>
<dbReference type="NCBIfam" id="NF009116">
    <property type="entry name" value="PRK12466.1"/>
    <property type="match status" value="1"/>
</dbReference>
<dbReference type="PANTHER" id="PTHR43822:SF9">
    <property type="entry name" value="3-ISOPROPYLMALATE DEHYDRATASE"/>
    <property type="match status" value="1"/>
</dbReference>
<dbReference type="PANTHER" id="PTHR43822">
    <property type="entry name" value="HOMOACONITASE, MITOCHONDRIAL-RELATED"/>
    <property type="match status" value="1"/>
</dbReference>
<dbReference type="Pfam" id="PF00330">
    <property type="entry name" value="Aconitase"/>
    <property type="match status" value="1"/>
</dbReference>
<dbReference type="PRINTS" id="PR00415">
    <property type="entry name" value="ACONITASE"/>
</dbReference>
<dbReference type="SUPFAM" id="SSF53732">
    <property type="entry name" value="Aconitase iron-sulfur domain"/>
    <property type="match status" value="1"/>
</dbReference>
<dbReference type="PROSITE" id="PS00450">
    <property type="entry name" value="ACONITASE_1"/>
    <property type="match status" value="1"/>
</dbReference>
<dbReference type="PROSITE" id="PS01244">
    <property type="entry name" value="ACONITASE_2"/>
    <property type="match status" value="1"/>
</dbReference>
<reference key="1">
    <citation type="journal article" date="2004" name="Nucleic Acids Res.">
        <title>Whole genome comparisons of serotype 4b and 1/2a strains of the food-borne pathogen Listeria monocytogenes reveal new insights into the core genome components of this species.</title>
        <authorList>
            <person name="Nelson K.E."/>
            <person name="Fouts D.E."/>
            <person name="Mongodin E.F."/>
            <person name="Ravel J."/>
            <person name="DeBoy R.T."/>
            <person name="Kolonay J.F."/>
            <person name="Rasko D.A."/>
            <person name="Angiuoli S.V."/>
            <person name="Gill S.R."/>
            <person name="Paulsen I.T."/>
            <person name="Peterson J.D."/>
            <person name="White O."/>
            <person name="Nelson W.C."/>
            <person name="Nierman W.C."/>
            <person name="Beanan M.J."/>
            <person name="Brinkac L.M."/>
            <person name="Daugherty S.C."/>
            <person name="Dodson R.J."/>
            <person name="Durkin A.S."/>
            <person name="Madupu R."/>
            <person name="Haft D.H."/>
            <person name="Selengut J."/>
            <person name="Van Aken S.E."/>
            <person name="Khouri H.M."/>
            <person name="Fedorova N."/>
            <person name="Forberger H.A."/>
            <person name="Tran B."/>
            <person name="Kathariou S."/>
            <person name="Wonderling L.D."/>
            <person name="Uhlich G.A."/>
            <person name="Bayles D.O."/>
            <person name="Luchansky J.B."/>
            <person name="Fraser C.M."/>
        </authorList>
    </citation>
    <scope>NUCLEOTIDE SEQUENCE [LARGE SCALE GENOMIC DNA]</scope>
    <source>
        <strain>F2365</strain>
    </source>
</reference>
<sequence length="462" mass="50942">MGKTLFDKLWNRHVIYGKEGEPQLLYVDLHLIHEVTSPQAFEGLRMENRPLRRPDKTFATMDHNVPTEDIFNIQDLVAKKQIEALQTNCEEFGVTLADMGSDRQGIVHMVGPETGLTQPGKVIVCGDSHTATHGAFGAIGFGIGSSEVEHVFATQTIWQQKPKSMGIEINGNLPKGVYAKDIILHLIATYGVAFGTGYAVEYYGETIRNMSMEERMTICNMAIEGGAKMGMMAPDETTFEYVRGREYAPADMDKAISDWKTLQTDPDAEYDLHIKMDASILEPYVTWGTNPEMGVPFSKAFPEIKDMNYERAYEYMGLKPGQTAEEIELGYVFIGSCTNARLSDLEEAARIVKGNKVKNNIRALVVPGSRQVRNAAESIGLDKIFIEAGFEWREPGCSMCLGMNPDQVPDGVHCASTSNRNFEGRQGKGARTHLVSPAMAAAAAINGHFIDIRKEAVISGGN</sequence>
<name>LEUC_LISMF</name>
<protein>
    <recommendedName>
        <fullName evidence="1">3-isopropylmalate dehydratase large subunit</fullName>
        <ecNumber evidence="1">4.2.1.33</ecNumber>
    </recommendedName>
    <alternativeName>
        <fullName evidence="1">Alpha-IPM isomerase</fullName>
        <shortName evidence="1">IPMI</shortName>
    </alternativeName>
    <alternativeName>
        <fullName evidence="1">Isopropylmalate isomerase</fullName>
    </alternativeName>
</protein>
<proteinExistence type="inferred from homology"/>
<keyword id="KW-0004">4Fe-4S</keyword>
<keyword id="KW-0028">Amino-acid biosynthesis</keyword>
<keyword id="KW-0100">Branched-chain amino acid biosynthesis</keyword>
<keyword id="KW-0408">Iron</keyword>
<keyword id="KW-0411">Iron-sulfur</keyword>
<keyword id="KW-0432">Leucine biosynthesis</keyword>
<keyword id="KW-0456">Lyase</keyword>
<keyword id="KW-0479">Metal-binding</keyword>
<gene>
    <name evidence="1" type="primary">leuC</name>
    <name type="ordered locus">LMOf2365_2012</name>
</gene>
<feature type="chain" id="PRO_0000076759" description="3-isopropylmalate dehydratase large subunit">
    <location>
        <begin position="1"/>
        <end position="462"/>
    </location>
</feature>
<feature type="binding site" evidence="1">
    <location>
        <position position="337"/>
    </location>
    <ligand>
        <name>[4Fe-4S] cluster</name>
        <dbReference type="ChEBI" id="CHEBI:49883"/>
    </ligand>
</feature>
<feature type="binding site" evidence="1">
    <location>
        <position position="397"/>
    </location>
    <ligand>
        <name>[4Fe-4S] cluster</name>
        <dbReference type="ChEBI" id="CHEBI:49883"/>
    </ligand>
</feature>
<feature type="binding site" evidence="1">
    <location>
        <position position="400"/>
    </location>
    <ligand>
        <name>[4Fe-4S] cluster</name>
        <dbReference type="ChEBI" id="CHEBI:49883"/>
    </ligand>
</feature>
<comment type="function">
    <text evidence="1">Catalyzes the isomerization between 2-isopropylmalate and 3-isopropylmalate, via the formation of 2-isopropylmaleate.</text>
</comment>
<comment type="catalytic activity">
    <reaction evidence="1">
        <text>(2R,3S)-3-isopropylmalate = (2S)-2-isopropylmalate</text>
        <dbReference type="Rhea" id="RHEA:32287"/>
        <dbReference type="ChEBI" id="CHEBI:1178"/>
        <dbReference type="ChEBI" id="CHEBI:35121"/>
        <dbReference type="EC" id="4.2.1.33"/>
    </reaction>
</comment>
<comment type="cofactor">
    <cofactor evidence="1">
        <name>[4Fe-4S] cluster</name>
        <dbReference type="ChEBI" id="CHEBI:49883"/>
    </cofactor>
    <text evidence="1">Binds 1 [4Fe-4S] cluster per subunit.</text>
</comment>
<comment type="pathway">
    <text evidence="1">Amino-acid biosynthesis; L-leucine biosynthesis; L-leucine from 3-methyl-2-oxobutanoate: step 2/4.</text>
</comment>
<comment type="subunit">
    <text evidence="1">Heterodimer of LeuC and LeuD.</text>
</comment>
<comment type="similarity">
    <text evidence="1">Belongs to the aconitase/IPM isomerase family. LeuC type 1 subfamily.</text>
</comment>
<evidence type="ECO:0000255" key="1">
    <source>
        <dbReference type="HAMAP-Rule" id="MF_01026"/>
    </source>
</evidence>
<organism>
    <name type="scientific">Listeria monocytogenes serotype 4b (strain F2365)</name>
    <dbReference type="NCBI Taxonomy" id="265669"/>
    <lineage>
        <taxon>Bacteria</taxon>
        <taxon>Bacillati</taxon>
        <taxon>Bacillota</taxon>
        <taxon>Bacilli</taxon>
        <taxon>Bacillales</taxon>
        <taxon>Listeriaceae</taxon>
        <taxon>Listeria</taxon>
    </lineage>
</organism>
<accession>Q71Y33</accession>